<sequence>MALEFTLNHVAPAAAVDCLVVGAYADHTLTPAAQALDAASGGRLTSLAQRGDLSGKTGATTLLHDLPGVSAPRVLVVGLGDAARFGVPQYLKAVGDAVRALKAGATRSALFTLSEVAIKDRDAAWAIRQAVIAADHAAYRYTATLGKKKTDDAGLAQLAIAGDDALALAQGQAIAAGVEFARELGNLPPNYCTPAYLAEVGVKFAGEHDGAEAEILDEHQMEALGMGSLLAVARGSANRPRLVVLKWTGGGDAKPYVLVGKGITFDTGGVNLKTQGGIEEMKYDMCGGANVIGTFVAAVKAKLPLNLVVVVPAVENAIDGNAYRPSDVITSMSGKTIEVGNTDAEGRLILCDALTYAQRFEPAALVDVATLTGACMVALGHQTAGLMSKHDDLANELLAAGEHVFDRAWRLPLWDEYQPMLDSTFADVYNIGGRWAGAITAGCFLSRFTEGQRWAHLDIAGVASDEGKRGMATGRPVGLLSQWLLDQAARA</sequence>
<proteinExistence type="inferred from homology"/>
<name>AMPA_STRMK</name>
<comment type="function">
    <text evidence="1">Presumably involved in the processing and regular turnover of intracellular proteins. Catalyzes the removal of unsubstituted N-terminal amino acids from various peptides.</text>
</comment>
<comment type="catalytic activity">
    <reaction evidence="1">
        <text>Release of an N-terminal amino acid, Xaa-|-Yaa-, in which Xaa is preferably Leu, but may be other amino acids including Pro although not Arg or Lys, and Yaa may be Pro. Amino acid amides and methyl esters are also readily hydrolyzed, but rates on arylamides are exceedingly low.</text>
        <dbReference type="EC" id="3.4.11.1"/>
    </reaction>
</comment>
<comment type="catalytic activity">
    <reaction evidence="1">
        <text>Release of an N-terminal amino acid, preferentially leucine, but not glutamic or aspartic acids.</text>
        <dbReference type="EC" id="3.4.11.10"/>
    </reaction>
</comment>
<comment type="cofactor">
    <cofactor evidence="1">
        <name>Mn(2+)</name>
        <dbReference type="ChEBI" id="CHEBI:29035"/>
    </cofactor>
    <text evidence="1">Binds 2 manganese ions per subunit.</text>
</comment>
<comment type="subcellular location">
    <subcellularLocation>
        <location evidence="1">Cytoplasm</location>
    </subcellularLocation>
</comment>
<comment type="similarity">
    <text evidence="1">Belongs to the peptidase M17 family.</text>
</comment>
<keyword id="KW-0031">Aminopeptidase</keyword>
<keyword id="KW-0963">Cytoplasm</keyword>
<keyword id="KW-0378">Hydrolase</keyword>
<keyword id="KW-0464">Manganese</keyword>
<keyword id="KW-0479">Metal-binding</keyword>
<keyword id="KW-0645">Protease</keyword>
<keyword id="KW-1185">Reference proteome</keyword>
<organism>
    <name type="scientific">Stenotrophomonas maltophilia (strain K279a)</name>
    <dbReference type="NCBI Taxonomy" id="522373"/>
    <lineage>
        <taxon>Bacteria</taxon>
        <taxon>Pseudomonadati</taxon>
        <taxon>Pseudomonadota</taxon>
        <taxon>Gammaproteobacteria</taxon>
        <taxon>Lysobacterales</taxon>
        <taxon>Lysobacteraceae</taxon>
        <taxon>Stenotrophomonas</taxon>
        <taxon>Stenotrophomonas maltophilia group</taxon>
    </lineage>
</organism>
<evidence type="ECO:0000255" key="1">
    <source>
        <dbReference type="HAMAP-Rule" id="MF_00181"/>
    </source>
</evidence>
<gene>
    <name evidence="1" type="primary">pepA</name>
    <name type="ordered locus">Smlt0675</name>
</gene>
<dbReference type="EC" id="3.4.11.1" evidence="1"/>
<dbReference type="EC" id="3.4.11.10" evidence="1"/>
<dbReference type="EMBL" id="AM743169">
    <property type="protein sequence ID" value="CAQ44257.1"/>
    <property type="molecule type" value="Genomic_DNA"/>
</dbReference>
<dbReference type="RefSeq" id="WP_012479103.1">
    <property type="nucleotide sequence ID" value="NC_010943.1"/>
</dbReference>
<dbReference type="SMR" id="B2FMS4"/>
<dbReference type="MEROPS" id="M17.003"/>
<dbReference type="EnsemblBacteria" id="CAQ44257">
    <property type="protein sequence ID" value="CAQ44257"/>
    <property type="gene ID" value="Smlt0675"/>
</dbReference>
<dbReference type="KEGG" id="sml:Smlt0675"/>
<dbReference type="PATRIC" id="fig|522373.3.peg.645"/>
<dbReference type="eggNOG" id="COG0260">
    <property type="taxonomic scope" value="Bacteria"/>
</dbReference>
<dbReference type="HOGENOM" id="CLU_013734_2_2_6"/>
<dbReference type="Proteomes" id="UP000008840">
    <property type="component" value="Chromosome"/>
</dbReference>
<dbReference type="GO" id="GO:0005737">
    <property type="term" value="C:cytoplasm"/>
    <property type="evidence" value="ECO:0007669"/>
    <property type="project" value="UniProtKB-SubCell"/>
</dbReference>
<dbReference type="GO" id="GO:0030145">
    <property type="term" value="F:manganese ion binding"/>
    <property type="evidence" value="ECO:0007669"/>
    <property type="project" value="UniProtKB-UniRule"/>
</dbReference>
<dbReference type="GO" id="GO:0070006">
    <property type="term" value="F:metalloaminopeptidase activity"/>
    <property type="evidence" value="ECO:0007669"/>
    <property type="project" value="InterPro"/>
</dbReference>
<dbReference type="GO" id="GO:0006508">
    <property type="term" value="P:proteolysis"/>
    <property type="evidence" value="ECO:0007669"/>
    <property type="project" value="UniProtKB-KW"/>
</dbReference>
<dbReference type="CDD" id="cd00433">
    <property type="entry name" value="Peptidase_M17"/>
    <property type="match status" value="1"/>
</dbReference>
<dbReference type="Gene3D" id="3.40.220.10">
    <property type="entry name" value="Leucine Aminopeptidase, subunit E, domain 1"/>
    <property type="match status" value="1"/>
</dbReference>
<dbReference type="Gene3D" id="3.40.630.10">
    <property type="entry name" value="Zn peptidases"/>
    <property type="match status" value="1"/>
</dbReference>
<dbReference type="HAMAP" id="MF_00181">
    <property type="entry name" value="Cytosol_peptidase_M17"/>
    <property type="match status" value="1"/>
</dbReference>
<dbReference type="InterPro" id="IPR011356">
    <property type="entry name" value="Leucine_aapep/pepB"/>
</dbReference>
<dbReference type="InterPro" id="IPR043472">
    <property type="entry name" value="Macro_dom-like"/>
</dbReference>
<dbReference type="InterPro" id="IPR000819">
    <property type="entry name" value="Peptidase_M17_C"/>
</dbReference>
<dbReference type="InterPro" id="IPR023042">
    <property type="entry name" value="Peptidase_M17_leu_NH2_pept"/>
</dbReference>
<dbReference type="InterPro" id="IPR008283">
    <property type="entry name" value="Peptidase_M17_N"/>
</dbReference>
<dbReference type="NCBIfam" id="NF002074">
    <property type="entry name" value="PRK00913.1-4"/>
    <property type="match status" value="1"/>
</dbReference>
<dbReference type="PANTHER" id="PTHR11963:SF23">
    <property type="entry name" value="CYTOSOL AMINOPEPTIDASE"/>
    <property type="match status" value="1"/>
</dbReference>
<dbReference type="PANTHER" id="PTHR11963">
    <property type="entry name" value="LEUCINE AMINOPEPTIDASE-RELATED"/>
    <property type="match status" value="1"/>
</dbReference>
<dbReference type="Pfam" id="PF00883">
    <property type="entry name" value="Peptidase_M17"/>
    <property type="match status" value="1"/>
</dbReference>
<dbReference type="Pfam" id="PF02789">
    <property type="entry name" value="Peptidase_M17_N"/>
    <property type="match status" value="1"/>
</dbReference>
<dbReference type="PRINTS" id="PR00481">
    <property type="entry name" value="LAMNOPPTDASE"/>
</dbReference>
<dbReference type="SUPFAM" id="SSF52949">
    <property type="entry name" value="Macro domain-like"/>
    <property type="match status" value="1"/>
</dbReference>
<dbReference type="SUPFAM" id="SSF53187">
    <property type="entry name" value="Zn-dependent exopeptidases"/>
    <property type="match status" value="1"/>
</dbReference>
<dbReference type="PROSITE" id="PS00631">
    <property type="entry name" value="CYTOSOL_AP"/>
    <property type="match status" value="1"/>
</dbReference>
<feature type="chain" id="PRO_1000098354" description="Probable cytosol aminopeptidase">
    <location>
        <begin position="1"/>
        <end position="491"/>
    </location>
</feature>
<feature type="active site" evidence="1">
    <location>
        <position position="273"/>
    </location>
</feature>
<feature type="active site" evidence="1">
    <location>
        <position position="347"/>
    </location>
</feature>
<feature type="binding site" evidence="1">
    <location>
        <position position="261"/>
    </location>
    <ligand>
        <name>Mn(2+)</name>
        <dbReference type="ChEBI" id="CHEBI:29035"/>
        <label>2</label>
    </ligand>
</feature>
<feature type="binding site" evidence="1">
    <location>
        <position position="266"/>
    </location>
    <ligand>
        <name>Mn(2+)</name>
        <dbReference type="ChEBI" id="CHEBI:29035"/>
        <label>1</label>
    </ligand>
</feature>
<feature type="binding site" evidence="1">
    <location>
        <position position="266"/>
    </location>
    <ligand>
        <name>Mn(2+)</name>
        <dbReference type="ChEBI" id="CHEBI:29035"/>
        <label>2</label>
    </ligand>
</feature>
<feature type="binding site" evidence="1">
    <location>
        <position position="284"/>
    </location>
    <ligand>
        <name>Mn(2+)</name>
        <dbReference type="ChEBI" id="CHEBI:29035"/>
        <label>2</label>
    </ligand>
</feature>
<feature type="binding site" evidence="1">
    <location>
        <position position="343"/>
    </location>
    <ligand>
        <name>Mn(2+)</name>
        <dbReference type="ChEBI" id="CHEBI:29035"/>
        <label>1</label>
    </ligand>
</feature>
<feature type="binding site" evidence="1">
    <location>
        <position position="345"/>
    </location>
    <ligand>
        <name>Mn(2+)</name>
        <dbReference type="ChEBI" id="CHEBI:29035"/>
        <label>1</label>
    </ligand>
</feature>
<feature type="binding site" evidence="1">
    <location>
        <position position="345"/>
    </location>
    <ligand>
        <name>Mn(2+)</name>
        <dbReference type="ChEBI" id="CHEBI:29035"/>
        <label>2</label>
    </ligand>
</feature>
<reference key="1">
    <citation type="journal article" date="2008" name="Genome Biol.">
        <title>The complete genome, comparative and functional analysis of Stenotrophomonas maltophilia reveals an organism heavily shielded by drug resistance determinants.</title>
        <authorList>
            <person name="Crossman L.C."/>
            <person name="Gould V.C."/>
            <person name="Dow J.M."/>
            <person name="Vernikos G.S."/>
            <person name="Okazaki A."/>
            <person name="Sebaihia M."/>
            <person name="Saunders D."/>
            <person name="Arrowsmith C."/>
            <person name="Carver T."/>
            <person name="Peters N."/>
            <person name="Adlem E."/>
            <person name="Kerhornou A."/>
            <person name="Lord A."/>
            <person name="Murphy L."/>
            <person name="Seeger K."/>
            <person name="Squares R."/>
            <person name="Rutter S."/>
            <person name="Quail M.A."/>
            <person name="Rajandream M.A."/>
            <person name="Harris D."/>
            <person name="Churcher C."/>
            <person name="Bentley S.D."/>
            <person name="Parkhill J."/>
            <person name="Thomson N.R."/>
            <person name="Avison M.B."/>
        </authorList>
    </citation>
    <scope>NUCLEOTIDE SEQUENCE [LARGE SCALE GENOMIC DNA]</scope>
    <source>
        <strain>K279a</strain>
    </source>
</reference>
<accession>B2FMS4</accession>
<protein>
    <recommendedName>
        <fullName evidence="1">Probable cytosol aminopeptidase</fullName>
        <ecNumber evidence="1">3.4.11.1</ecNumber>
    </recommendedName>
    <alternativeName>
        <fullName evidence="1">Leucine aminopeptidase</fullName>
        <shortName evidence="1">LAP</shortName>
        <ecNumber evidence="1">3.4.11.10</ecNumber>
    </alternativeName>
    <alternativeName>
        <fullName evidence="1">Leucyl aminopeptidase</fullName>
    </alternativeName>
</protein>